<name>RLMM_ECO57</name>
<sequence length="366" mass="41905">MNKVVLLCRPGFEKECAAEITDKAGQREIFGFARVKENAGYVIYECYQPDDGDKLIRELPFSSLIFARQWFVVGELLQHLPPEDRITPIVGMLQGVVEKGGELRVEVADTNESKELLKFCRKFTVPLRAALRDAGVLANYETPKRPVVHVFFIAPGCCYTGYSYSNNNSPFYMGIPRLKFPADAPSRSTLKLEEAFHVFIPADEWDERLANGMWAVDLGACPGGWTYQLVKRNMWVYSVDNGPMAQSLMDTGQVTWLREDGFKFRPTRSNISWMVCDMVEKPAKVAALMAQWLVNGWCRETIFNLKLPMKKRYEEVSHNLAYIQAQLDEHGINAQIQARQLYHDREEVTVHVRRIWAAVGGRRDER</sequence>
<reference key="1">
    <citation type="journal article" date="2001" name="Nature">
        <title>Genome sequence of enterohaemorrhagic Escherichia coli O157:H7.</title>
        <authorList>
            <person name="Perna N.T."/>
            <person name="Plunkett G. III"/>
            <person name="Burland V."/>
            <person name="Mau B."/>
            <person name="Glasner J.D."/>
            <person name="Rose D.J."/>
            <person name="Mayhew G.F."/>
            <person name="Evans P.S."/>
            <person name="Gregor J."/>
            <person name="Kirkpatrick H.A."/>
            <person name="Posfai G."/>
            <person name="Hackett J."/>
            <person name="Klink S."/>
            <person name="Boutin A."/>
            <person name="Shao Y."/>
            <person name="Miller L."/>
            <person name="Grotbeck E.J."/>
            <person name="Davis N.W."/>
            <person name="Lim A."/>
            <person name="Dimalanta E.T."/>
            <person name="Potamousis K."/>
            <person name="Apodaca J."/>
            <person name="Anantharaman T.S."/>
            <person name="Lin J."/>
            <person name="Yen G."/>
            <person name="Schwartz D.C."/>
            <person name="Welch R.A."/>
            <person name="Blattner F.R."/>
        </authorList>
    </citation>
    <scope>NUCLEOTIDE SEQUENCE [LARGE SCALE GENOMIC DNA]</scope>
    <source>
        <strain>O157:H7 / EDL933 / ATCC 700927 / EHEC</strain>
    </source>
</reference>
<reference key="2">
    <citation type="journal article" date="2001" name="DNA Res.">
        <title>Complete genome sequence of enterohemorrhagic Escherichia coli O157:H7 and genomic comparison with a laboratory strain K-12.</title>
        <authorList>
            <person name="Hayashi T."/>
            <person name="Makino K."/>
            <person name="Ohnishi M."/>
            <person name="Kurokawa K."/>
            <person name="Ishii K."/>
            <person name="Yokoyama K."/>
            <person name="Han C.-G."/>
            <person name="Ohtsubo E."/>
            <person name="Nakayama K."/>
            <person name="Murata T."/>
            <person name="Tanaka M."/>
            <person name="Tobe T."/>
            <person name="Iida T."/>
            <person name="Takami H."/>
            <person name="Honda T."/>
            <person name="Sasakawa C."/>
            <person name="Ogasawara N."/>
            <person name="Yasunaga T."/>
            <person name="Kuhara S."/>
            <person name="Shiba T."/>
            <person name="Hattori M."/>
            <person name="Shinagawa H."/>
        </authorList>
    </citation>
    <scope>NUCLEOTIDE SEQUENCE [LARGE SCALE GENOMIC DNA]</scope>
    <source>
        <strain>O157:H7 / Sakai / RIMD 0509952 / EHEC</strain>
    </source>
</reference>
<accession>P0ADR7</accession>
<accession>P32066</accession>
<organism>
    <name type="scientific">Escherichia coli O157:H7</name>
    <dbReference type="NCBI Taxonomy" id="83334"/>
    <lineage>
        <taxon>Bacteria</taxon>
        <taxon>Pseudomonadati</taxon>
        <taxon>Pseudomonadota</taxon>
        <taxon>Gammaproteobacteria</taxon>
        <taxon>Enterobacterales</taxon>
        <taxon>Enterobacteriaceae</taxon>
        <taxon>Escherichia</taxon>
    </lineage>
</organism>
<protein>
    <recommendedName>
        <fullName evidence="1">Ribosomal RNA large subunit methyltransferase M</fullName>
        <ecNumber evidence="1">2.1.1.186</ecNumber>
    </recommendedName>
    <alternativeName>
        <fullName evidence="1">23S rRNA (cytidine2498-2'-O)-methyltransferase</fullName>
    </alternativeName>
    <alternativeName>
        <fullName evidence="1">23S rRNA 2'-O-ribose methyltransferase RlmM</fullName>
    </alternativeName>
</protein>
<evidence type="ECO:0000255" key="1">
    <source>
        <dbReference type="HAMAP-Rule" id="MF_01551"/>
    </source>
</evidence>
<comment type="function">
    <text evidence="1">Catalyzes the 2'-O-methylation at nucleotide C2498 in 23S rRNA.</text>
</comment>
<comment type="catalytic activity">
    <reaction evidence="1">
        <text>cytidine(2498) in 23S rRNA + S-adenosyl-L-methionine = 2'-O-methylcytidine(2498) in 23S rRNA + S-adenosyl-L-homocysteine + H(+)</text>
        <dbReference type="Rhea" id="RHEA:42788"/>
        <dbReference type="Rhea" id="RHEA-COMP:10244"/>
        <dbReference type="Rhea" id="RHEA-COMP:10245"/>
        <dbReference type="ChEBI" id="CHEBI:15378"/>
        <dbReference type="ChEBI" id="CHEBI:57856"/>
        <dbReference type="ChEBI" id="CHEBI:59789"/>
        <dbReference type="ChEBI" id="CHEBI:74495"/>
        <dbReference type="ChEBI" id="CHEBI:82748"/>
        <dbReference type="EC" id="2.1.1.186"/>
    </reaction>
</comment>
<comment type="subunit">
    <text evidence="1">Monomer.</text>
</comment>
<comment type="subcellular location">
    <subcellularLocation>
        <location evidence="1">Cytoplasm</location>
    </subcellularLocation>
</comment>
<comment type="similarity">
    <text evidence="1">Belongs to the class I-like SAM-binding methyltransferase superfamily. RNA methyltransferase RlmE family. RlmM subfamily.</text>
</comment>
<proteinExistence type="inferred from homology"/>
<dbReference type="EC" id="2.1.1.186" evidence="1"/>
<dbReference type="EMBL" id="AE005174">
    <property type="protein sequence ID" value="AAG57920.1"/>
    <property type="molecule type" value="Genomic_DNA"/>
</dbReference>
<dbReference type="EMBL" id="BA000007">
    <property type="protein sequence ID" value="BAB37089.1"/>
    <property type="molecule type" value="Genomic_DNA"/>
</dbReference>
<dbReference type="PIR" id="B91087">
    <property type="entry name" value="B91087"/>
</dbReference>
<dbReference type="RefSeq" id="NP_311693.1">
    <property type="nucleotide sequence ID" value="NC_002695.1"/>
</dbReference>
<dbReference type="RefSeq" id="WP_001045520.1">
    <property type="nucleotide sequence ID" value="NZ_VOAI01000003.1"/>
</dbReference>
<dbReference type="SMR" id="P0ADR7"/>
<dbReference type="STRING" id="155864.Z4123"/>
<dbReference type="GeneID" id="75203803"/>
<dbReference type="GeneID" id="916522"/>
<dbReference type="KEGG" id="ece:Z4123"/>
<dbReference type="KEGG" id="ecs:ECs_3666"/>
<dbReference type="PATRIC" id="fig|386585.9.peg.3832"/>
<dbReference type="eggNOG" id="COG2933">
    <property type="taxonomic scope" value="Bacteria"/>
</dbReference>
<dbReference type="HOGENOM" id="CLU_043780_0_0_6"/>
<dbReference type="OMA" id="PVDWMVC"/>
<dbReference type="Proteomes" id="UP000000558">
    <property type="component" value="Chromosome"/>
</dbReference>
<dbReference type="Proteomes" id="UP000002519">
    <property type="component" value="Chromosome"/>
</dbReference>
<dbReference type="GO" id="GO:0005737">
    <property type="term" value="C:cytoplasm"/>
    <property type="evidence" value="ECO:0007669"/>
    <property type="project" value="UniProtKB-SubCell"/>
</dbReference>
<dbReference type="GO" id="GO:0008757">
    <property type="term" value="F:S-adenosylmethionine-dependent methyltransferase activity"/>
    <property type="evidence" value="ECO:0007669"/>
    <property type="project" value="UniProtKB-UniRule"/>
</dbReference>
<dbReference type="GO" id="GO:0032259">
    <property type="term" value="P:methylation"/>
    <property type="evidence" value="ECO:0007669"/>
    <property type="project" value="UniProtKB-KW"/>
</dbReference>
<dbReference type="GO" id="GO:0006364">
    <property type="term" value="P:rRNA processing"/>
    <property type="evidence" value="ECO:0007669"/>
    <property type="project" value="UniProtKB-UniRule"/>
</dbReference>
<dbReference type="FunFam" id="3.30.2300.20:FF:000001">
    <property type="entry name" value="Ribosomal RNA large subunit methyltransferase M"/>
    <property type="match status" value="1"/>
</dbReference>
<dbReference type="FunFam" id="3.30.70.2810:FF:000001">
    <property type="entry name" value="Ribosomal RNA large subunit methyltransferase M"/>
    <property type="match status" value="1"/>
</dbReference>
<dbReference type="FunFam" id="3.40.50.150:FF:000020">
    <property type="entry name" value="Ribosomal RNA large subunit methyltransferase M"/>
    <property type="match status" value="1"/>
</dbReference>
<dbReference type="Gene3D" id="3.30.2300.20">
    <property type="match status" value="1"/>
</dbReference>
<dbReference type="Gene3D" id="3.30.70.2810">
    <property type="match status" value="1"/>
</dbReference>
<dbReference type="Gene3D" id="3.40.50.150">
    <property type="entry name" value="Vaccinia Virus protein VP39"/>
    <property type="match status" value="1"/>
</dbReference>
<dbReference type="HAMAP" id="MF_01551">
    <property type="entry name" value="23SrRNA_methyltr_M"/>
    <property type="match status" value="1"/>
</dbReference>
<dbReference type="InterPro" id="IPR040739">
    <property type="entry name" value="RlmM_FDX"/>
</dbReference>
<dbReference type="InterPro" id="IPR048646">
    <property type="entry name" value="RlmM_THUMP-like"/>
</dbReference>
<dbReference type="InterPro" id="IPR002877">
    <property type="entry name" value="RNA_MeTrfase_FtsJ_dom"/>
</dbReference>
<dbReference type="InterPro" id="IPR011224">
    <property type="entry name" value="rRNA_MeTrfase_M"/>
</dbReference>
<dbReference type="InterPro" id="IPR029063">
    <property type="entry name" value="SAM-dependent_MTases_sf"/>
</dbReference>
<dbReference type="NCBIfam" id="NF008734">
    <property type="entry name" value="PRK11760.1"/>
    <property type="match status" value="1"/>
</dbReference>
<dbReference type="PANTHER" id="PTHR37524">
    <property type="entry name" value="RIBOSOMAL RNA LARGE SUBUNIT METHYLTRANSFERASE M"/>
    <property type="match status" value="1"/>
</dbReference>
<dbReference type="PANTHER" id="PTHR37524:SF2">
    <property type="entry name" value="RIBOSOMAL RNA METHYLTRANSFERASE FTSJ DOMAIN-CONTAINING PROTEIN"/>
    <property type="match status" value="1"/>
</dbReference>
<dbReference type="Pfam" id="PF01728">
    <property type="entry name" value="FtsJ"/>
    <property type="match status" value="1"/>
</dbReference>
<dbReference type="Pfam" id="PF18125">
    <property type="entry name" value="RlmM_FDX"/>
    <property type="match status" value="1"/>
</dbReference>
<dbReference type="Pfam" id="PF21239">
    <property type="entry name" value="RLMM_N"/>
    <property type="match status" value="1"/>
</dbReference>
<dbReference type="PIRSF" id="PIRSF028774">
    <property type="entry name" value="UCP028774"/>
    <property type="match status" value="1"/>
</dbReference>
<dbReference type="SUPFAM" id="SSF53335">
    <property type="entry name" value="S-adenosyl-L-methionine-dependent methyltransferases"/>
    <property type="match status" value="1"/>
</dbReference>
<feature type="chain" id="PRO_0000070403" description="Ribosomal RNA large subunit methyltransferase M">
    <location>
        <begin position="1"/>
        <end position="366"/>
    </location>
</feature>
<feature type="active site" description="Proton acceptor" evidence="1">
    <location>
        <position position="306"/>
    </location>
</feature>
<feature type="binding site" evidence="1">
    <location>
        <position position="188"/>
    </location>
    <ligand>
        <name>S-adenosyl-L-methionine</name>
        <dbReference type="ChEBI" id="CHEBI:59789"/>
    </ligand>
</feature>
<feature type="binding site" evidence="1">
    <location>
        <begin position="221"/>
        <end position="224"/>
    </location>
    <ligand>
        <name>S-adenosyl-L-methionine</name>
        <dbReference type="ChEBI" id="CHEBI:59789"/>
    </ligand>
</feature>
<feature type="binding site" evidence="1">
    <location>
        <position position="240"/>
    </location>
    <ligand>
        <name>S-adenosyl-L-methionine</name>
        <dbReference type="ChEBI" id="CHEBI:59789"/>
    </ligand>
</feature>
<feature type="binding site" evidence="1">
    <location>
        <position position="260"/>
    </location>
    <ligand>
        <name>S-adenosyl-L-methionine</name>
        <dbReference type="ChEBI" id="CHEBI:59789"/>
    </ligand>
</feature>
<feature type="binding site" evidence="1">
    <location>
        <position position="277"/>
    </location>
    <ligand>
        <name>S-adenosyl-L-methionine</name>
        <dbReference type="ChEBI" id="CHEBI:59789"/>
    </ligand>
</feature>
<keyword id="KW-0963">Cytoplasm</keyword>
<keyword id="KW-0489">Methyltransferase</keyword>
<keyword id="KW-1185">Reference proteome</keyword>
<keyword id="KW-0698">rRNA processing</keyword>
<keyword id="KW-0949">S-adenosyl-L-methionine</keyword>
<keyword id="KW-0808">Transferase</keyword>
<gene>
    <name evidence="1" type="primary">rlmM</name>
    <name type="ordered locus">Z4123</name>
    <name type="ordered locus">ECs3666</name>
</gene>